<accession>Q4UND3</accession>
<organism>
    <name type="scientific">Rickettsia felis (strain ATCC VR-1525 / URRWXCal2)</name>
    <name type="common">Rickettsia azadi</name>
    <dbReference type="NCBI Taxonomy" id="315456"/>
    <lineage>
        <taxon>Bacteria</taxon>
        <taxon>Pseudomonadati</taxon>
        <taxon>Pseudomonadota</taxon>
        <taxon>Alphaproteobacteria</taxon>
        <taxon>Rickettsiales</taxon>
        <taxon>Rickettsiaceae</taxon>
        <taxon>Rickettsieae</taxon>
        <taxon>Rickettsia</taxon>
        <taxon>spotted fever group</taxon>
    </lineage>
</organism>
<evidence type="ECO:0000250" key="1">
    <source>
        <dbReference type="UniProtKB" id="P00509"/>
    </source>
</evidence>
<evidence type="ECO:0000250" key="2">
    <source>
        <dbReference type="UniProtKB" id="Q02635"/>
    </source>
</evidence>
<evidence type="ECO:0000250" key="3">
    <source>
        <dbReference type="UniProtKB" id="Q56232"/>
    </source>
</evidence>
<evidence type="ECO:0000305" key="4"/>
<sequence>MSIISTRLNSIKPSPTLAVVKKTLELKKAGVDIIALGAGEPDFDTPDNIKEAAIKAIKDGFTKYTNVEGMPLLKQAIKDKFKRENNIDYELDEIIVSTGGKQVIYNLFMASLDKGDKVIIPAPYWVSYPDMVALSTGTPVFVNCGIENNFKLSAEALERSITDKTKWLIINSPSNPTGASYNFEELENIAKVLRKYPHVNVMSDDIYEHITFDDFKFYTLAQIAPDLKERIFTVNGVSKAYSMTGWRIGYGVGSKALIKAMTIIQSQSTSNPCSISQMAAIESLNGPQDYIKPNALNFQKKRDLALSILKRVKYFECYKPEGAFYLFVKCDKIFGHKTKSGKIIANSNDFAEYLLEEAKVAVVPGIAFGLEGYFRISYATSMEELEEACIRIERACGSISIKSSLRGDA</sequence>
<proteinExistence type="inferred from homology"/>
<name>AAPAT_RICFE</name>
<protein>
    <recommendedName>
        <fullName evidence="2">Probable aspartate/prephenate aminotransferase</fullName>
        <shortName evidence="2">AspAT / PAT</shortName>
        <ecNumber evidence="2">2.6.1.1</ecNumber>
        <ecNumber evidence="2">2.6.1.79</ecNumber>
    </recommendedName>
    <alternativeName>
        <fullName>Transaminase A</fullName>
    </alternativeName>
</protein>
<comment type="function">
    <text evidence="2">Catalyzes the reversible conversion of aspartate and 2-oxoglutarate to glutamate and oxaloacetate. Can also transaminate prephenate in the presence of glutamate.</text>
</comment>
<comment type="catalytic activity">
    <reaction evidence="2">
        <text>L-aspartate + 2-oxoglutarate = oxaloacetate + L-glutamate</text>
        <dbReference type="Rhea" id="RHEA:21824"/>
        <dbReference type="ChEBI" id="CHEBI:16452"/>
        <dbReference type="ChEBI" id="CHEBI:16810"/>
        <dbReference type="ChEBI" id="CHEBI:29985"/>
        <dbReference type="ChEBI" id="CHEBI:29991"/>
        <dbReference type="EC" id="2.6.1.1"/>
    </reaction>
</comment>
<comment type="catalytic activity">
    <reaction evidence="2">
        <text>L-arogenate + 2-oxoglutarate = prephenate + L-glutamate</text>
        <dbReference type="Rhea" id="RHEA:22880"/>
        <dbReference type="ChEBI" id="CHEBI:16810"/>
        <dbReference type="ChEBI" id="CHEBI:29934"/>
        <dbReference type="ChEBI" id="CHEBI:29985"/>
        <dbReference type="ChEBI" id="CHEBI:58180"/>
        <dbReference type="EC" id="2.6.1.79"/>
    </reaction>
</comment>
<comment type="cofactor">
    <cofactor evidence="2">
        <name>pyridoxal 5'-phosphate</name>
        <dbReference type="ChEBI" id="CHEBI:597326"/>
    </cofactor>
</comment>
<comment type="subunit">
    <text evidence="2">Homodimer.</text>
</comment>
<comment type="subcellular location">
    <subcellularLocation>
        <location evidence="2">Cytoplasm</location>
    </subcellularLocation>
</comment>
<comment type="similarity">
    <text evidence="4">Belongs to the class-I pyridoxal-phosphate-dependent aminotransferase family.</text>
</comment>
<dbReference type="EC" id="2.6.1.1" evidence="2"/>
<dbReference type="EC" id="2.6.1.79" evidence="2"/>
<dbReference type="EMBL" id="CP000053">
    <property type="protein sequence ID" value="AAY60925.1"/>
    <property type="molecule type" value="Genomic_DNA"/>
</dbReference>
<dbReference type="SMR" id="Q4UND3"/>
<dbReference type="STRING" id="315456.RF_0074"/>
<dbReference type="KEGG" id="rfe:RF_0074"/>
<dbReference type="eggNOG" id="COG0436">
    <property type="taxonomic scope" value="Bacteria"/>
</dbReference>
<dbReference type="HOGENOM" id="CLU_017584_4_3_5"/>
<dbReference type="OrthoDB" id="9804407at2"/>
<dbReference type="Proteomes" id="UP000008548">
    <property type="component" value="Chromosome"/>
</dbReference>
<dbReference type="GO" id="GO:0005737">
    <property type="term" value="C:cytoplasm"/>
    <property type="evidence" value="ECO:0007669"/>
    <property type="project" value="UniProtKB-SubCell"/>
</dbReference>
<dbReference type="GO" id="GO:0033854">
    <property type="term" value="F:glutamate-prephenate aminotransferase activity"/>
    <property type="evidence" value="ECO:0007669"/>
    <property type="project" value="UniProtKB-EC"/>
</dbReference>
<dbReference type="GO" id="GO:0004069">
    <property type="term" value="F:L-aspartate:2-oxoglutarate aminotransferase activity"/>
    <property type="evidence" value="ECO:0007669"/>
    <property type="project" value="UniProtKB-EC"/>
</dbReference>
<dbReference type="GO" id="GO:0030170">
    <property type="term" value="F:pyridoxal phosphate binding"/>
    <property type="evidence" value="ECO:0007669"/>
    <property type="project" value="InterPro"/>
</dbReference>
<dbReference type="GO" id="GO:0006520">
    <property type="term" value="P:amino acid metabolic process"/>
    <property type="evidence" value="ECO:0007669"/>
    <property type="project" value="InterPro"/>
</dbReference>
<dbReference type="GO" id="GO:0009058">
    <property type="term" value="P:biosynthetic process"/>
    <property type="evidence" value="ECO:0007669"/>
    <property type="project" value="InterPro"/>
</dbReference>
<dbReference type="CDD" id="cd00609">
    <property type="entry name" value="AAT_like"/>
    <property type="match status" value="1"/>
</dbReference>
<dbReference type="FunFam" id="3.40.640.10:FF:000033">
    <property type="entry name" value="Aspartate aminotransferase"/>
    <property type="match status" value="1"/>
</dbReference>
<dbReference type="Gene3D" id="3.90.1150.10">
    <property type="entry name" value="Aspartate Aminotransferase, domain 1"/>
    <property type="match status" value="1"/>
</dbReference>
<dbReference type="Gene3D" id="3.40.640.10">
    <property type="entry name" value="Type I PLP-dependent aspartate aminotransferase-like (Major domain)"/>
    <property type="match status" value="1"/>
</dbReference>
<dbReference type="InterPro" id="IPR004839">
    <property type="entry name" value="Aminotransferase_I/II_large"/>
</dbReference>
<dbReference type="InterPro" id="IPR050596">
    <property type="entry name" value="AspAT/PAT-like"/>
</dbReference>
<dbReference type="InterPro" id="IPR004838">
    <property type="entry name" value="NHTrfase_class1_PyrdxlP-BS"/>
</dbReference>
<dbReference type="InterPro" id="IPR015424">
    <property type="entry name" value="PyrdxlP-dep_Trfase"/>
</dbReference>
<dbReference type="InterPro" id="IPR015421">
    <property type="entry name" value="PyrdxlP-dep_Trfase_major"/>
</dbReference>
<dbReference type="InterPro" id="IPR015422">
    <property type="entry name" value="PyrdxlP-dep_Trfase_small"/>
</dbReference>
<dbReference type="PANTHER" id="PTHR46383">
    <property type="entry name" value="ASPARTATE AMINOTRANSFERASE"/>
    <property type="match status" value="1"/>
</dbReference>
<dbReference type="PANTHER" id="PTHR46383:SF1">
    <property type="entry name" value="ASPARTATE AMINOTRANSFERASE"/>
    <property type="match status" value="1"/>
</dbReference>
<dbReference type="Pfam" id="PF00155">
    <property type="entry name" value="Aminotran_1_2"/>
    <property type="match status" value="1"/>
</dbReference>
<dbReference type="PRINTS" id="PR00753">
    <property type="entry name" value="ACCSYNTHASE"/>
</dbReference>
<dbReference type="SUPFAM" id="SSF53383">
    <property type="entry name" value="PLP-dependent transferases"/>
    <property type="match status" value="1"/>
</dbReference>
<dbReference type="PROSITE" id="PS00105">
    <property type="entry name" value="AA_TRANSFER_CLASS_1"/>
    <property type="match status" value="1"/>
</dbReference>
<reference key="1">
    <citation type="journal article" date="2005" name="PLoS Biol.">
        <title>The genome sequence of Rickettsia felis identifies the first putative conjugative plasmid in an obligate intracellular parasite.</title>
        <authorList>
            <person name="Ogata H."/>
            <person name="Renesto P."/>
            <person name="Audic S."/>
            <person name="Robert C."/>
            <person name="Blanc G."/>
            <person name="Fournier P.-E."/>
            <person name="Parinello H."/>
            <person name="Claverie J.-M."/>
            <person name="Raoult D."/>
        </authorList>
    </citation>
    <scope>NUCLEOTIDE SEQUENCE [LARGE SCALE GENOMIC DNA]</scope>
    <source>
        <strain>ATCC VR-1525 / URRWXCal2</strain>
    </source>
</reference>
<feature type="chain" id="PRO_0000273125" description="Probable aspartate/prephenate aminotransferase">
    <location>
        <begin position="1"/>
        <end position="409"/>
    </location>
</feature>
<feature type="binding site" evidence="1">
    <location>
        <position position="39"/>
    </location>
    <ligand>
        <name>L-aspartate</name>
        <dbReference type="ChEBI" id="CHEBI:29991"/>
    </ligand>
</feature>
<feature type="binding site" evidence="3">
    <location>
        <position position="125"/>
    </location>
    <ligand>
        <name>L-aspartate</name>
        <dbReference type="ChEBI" id="CHEBI:29991"/>
    </ligand>
</feature>
<feature type="binding site" evidence="3">
    <location>
        <position position="175"/>
    </location>
    <ligand>
        <name>L-aspartate</name>
        <dbReference type="ChEBI" id="CHEBI:29991"/>
    </ligand>
</feature>
<feature type="binding site" evidence="3">
    <location>
        <position position="375"/>
    </location>
    <ligand>
        <name>L-aspartate</name>
        <dbReference type="ChEBI" id="CHEBI:29991"/>
    </ligand>
</feature>
<feature type="site" description="Important for prephenate aminotransferase activity" evidence="3">
    <location>
        <position position="12"/>
    </location>
</feature>
<feature type="modified residue" description="N6-(pyridoxal phosphate)lysine" evidence="3">
    <location>
        <position position="239"/>
    </location>
</feature>
<keyword id="KW-0032">Aminotransferase</keyword>
<keyword id="KW-0963">Cytoplasm</keyword>
<keyword id="KW-0663">Pyridoxal phosphate</keyword>
<keyword id="KW-0808">Transferase</keyword>
<gene>
    <name type="primary">aatA</name>
    <name type="ordered locus">RF_0074</name>
</gene>